<comment type="function">
    <text evidence="1">Regulatory subunit of a potassium efflux system that confers protection against electrophiles. Required for full activity of KefC. Shows redox enzymatic activity, but this enzymatic activity is not required for activation of KefC.</text>
</comment>
<comment type="catalytic activity">
    <reaction evidence="1">
        <text>a quinone + NADH + H(+) = a quinol + NAD(+)</text>
        <dbReference type="Rhea" id="RHEA:46160"/>
        <dbReference type="ChEBI" id="CHEBI:15378"/>
        <dbReference type="ChEBI" id="CHEBI:24646"/>
        <dbReference type="ChEBI" id="CHEBI:57540"/>
        <dbReference type="ChEBI" id="CHEBI:57945"/>
        <dbReference type="ChEBI" id="CHEBI:132124"/>
        <dbReference type="EC" id="1.6.5.2"/>
    </reaction>
</comment>
<comment type="catalytic activity">
    <reaction evidence="1">
        <text>a quinone + NADPH + H(+) = a quinol + NADP(+)</text>
        <dbReference type="Rhea" id="RHEA:46164"/>
        <dbReference type="ChEBI" id="CHEBI:15378"/>
        <dbReference type="ChEBI" id="CHEBI:24646"/>
        <dbReference type="ChEBI" id="CHEBI:57783"/>
        <dbReference type="ChEBI" id="CHEBI:58349"/>
        <dbReference type="ChEBI" id="CHEBI:132124"/>
        <dbReference type="EC" id="1.6.5.2"/>
    </reaction>
</comment>
<comment type="cofactor">
    <cofactor evidence="1">
        <name>FMN</name>
        <dbReference type="ChEBI" id="CHEBI:58210"/>
    </cofactor>
</comment>
<comment type="subunit">
    <text evidence="1">Homodimer. Interacts with KefC.</text>
</comment>
<comment type="subcellular location">
    <subcellularLocation>
        <location evidence="1">Cell inner membrane</location>
        <topology evidence="1">Peripheral membrane protein</topology>
        <orientation evidence="1">Cytoplasmic side</orientation>
    </subcellularLocation>
</comment>
<comment type="similarity">
    <text evidence="1">Belongs to the NAD(P)H dehydrogenase (quinone) family. KefF subfamily.</text>
</comment>
<proteinExistence type="inferred from homology"/>
<dbReference type="EC" id="1.6.5.2" evidence="1"/>
<dbReference type="EMBL" id="CP000036">
    <property type="protein sequence ID" value="ABB64771.1"/>
    <property type="molecule type" value="Genomic_DNA"/>
</dbReference>
<dbReference type="RefSeq" id="WP_000600735.1">
    <property type="nucleotide sequence ID" value="NC_007613.1"/>
</dbReference>
<dbReference type="SMR" id="Q326I7"/>
<dbReference type="KEGG" id="sbo:SBO_0035"/>
<dbReference type="HOGENOM" id="CLU_058643_0_2_6"/>
<dbReference type="Proteomes" id="UP000007067">
    <property type="component" value="Chromosome"/>
</dbReference>
<dbReference type="GO" id="GO:0005886">
    <property type="term" value="C:plasma membrane"/>
    <property type="evidence" value="ECO:0007669"/>
    <property type="project" value="UniProtKB-SubCell"/>
</dbReference>
<dbReference type="GO" id="GO:0009055">
    <property type="term" value="F:electron transfer activity"/>
    <property type="evidence" value="ECO:0007669"/>
    <property type="project" value="TreeGrafter"/>
</dbReference>
<dbReference type="GO" id="GO:0010181">
    <property type="term" value="F:FMN binding"/>
    <property type="evidence" value="ECO:0007669"/>
    <property type="project" value="UniProtKB-UniRule"/>
</dbReference>
<dbReference type="GO" id="GO:0050136">
    <property type="term" value="F:NADH:ubiquinone reductase (non-electrogenic) activity"/>
    <property type="evidence" value="ECO:0007669"/>
    <property type="project" value="RHEA"/>
</dbReference>
<dbReference type="GO" id="GO:0008753">
    <property type="term" value="F:NADPH dehydrogenase (quinone) activity"/>
    <property type="evidence" value="ECO:0007669"/>
    <property type="project" value="RHEA"/>
</dbReference>
<dbReference type="GO" id="GO:1901381">
    <property type="term" value="P:positive regulation of potassium ion transmembrane transport"/>
    <property type="evidence" value="ECO:0007669"/>
    <property type="project" value="UniProtKB-UniRule"/>
</dbReference>
<dbReference type="GO" id="GO:0006813">
    <property type="term" value="P:potassium ion transport"/>
    <property type="evidence" value="ECO:0007669"/>
    <property type="project" value="InterPro"/>
</dbReference>
<dbReference type="FunFam" id="3.40.50.360:FF:000008">
    <property type="entry name" value="Glutathione-regulated potassium-efflux system ancillary protein KefF"/>
    <property type="match status" value="1"/>
</dbReference>
<dbReference type="Gene3D" id="3.40.50.360">
    <property type="match status" value="1"/>
</dbReference>
<dbReference type="HAMAP" id="MF_01414">
    <property type="entry name" value="K_H_efflux_KefF"/>
    <property type="match status" value="1"/>
</dbReference>
<dbReference type="InterPro" id="IPR003680">
    <property type="entry name" value="Flavodoxin_fold"/>
</dbReference>
<dbReference type="InterPro" id="IPR029039">
    <property type="entry name" value="Flavoprotein-like_sf"/>
</dbReference>
<dbReference type="InterPro" id="IPR023948">
    <property type="entry name" value="K_H_efflux_KefF"/>
</dbReference>
<dbReference type="InterPro" id="IPR046980">
    <property type="entry name" value="KefG/KefF"/>
</dbReference>
<dbReference type="NCBIfam" id="NF002044">
    <property type="entry name" value="PRK00871.1"/>
    <property type="match status" value="1"/>
</dbReference>
<dbReference type="PANTHER" id="PTHR47307:SF2">
    <property type="entry name" value="GLUTATHIONE-REGULATED POTASSIUM-EFFLUX SYSTEM ANCILLARY PROTEIN KEFF"/>
    <property type="match status" value="1"/>
</dbReference>
<dbReference type="PANTHER" id="PTHR47307">
    <property type="entry name" value="GLUTATHIONE-REGULATED POTASSIUM-EFFLUX SYSTEM ANCILLARY PROTEIN KEFG"/>
    <property type="match status" value="1"/>
</dbReference>
<dbReference type="Pfam" id="PF02525">
    <property type="entry name" value="Flavodoxin_2"/>
    <property type="match status" value="1"/>
</dbReference>
<dbReference type="SUPFAM" id="SSF52218">
    <property type="entry name" value="Flavoproteins"/>
    <property type="match status" value="1"/>
</dbReference>
<name>KEFF_SHIBS</name>
<reference key="1">
    <citation type="journal article" date="2005" name="Nucleic Acids Res.">
        <title>Genome dynamics and diversity of Shigella species, the etiologic agents of bacillary dysentery.</title>
        <authorList>
            <person name="Yang F."/>
            <person name="Yang J."/>
            <person name="Zhang X."/>
            <person name="Chen L."/>
            <person name="Jiang Y."/>
            <person name="Yan Y."/>
            <person name="Tang X."/>
            <person name="Wang J."/>
            <person name="Xiong Z."/>
            <person name="Dong J."/>
            <person name="Xue Y."/>
            <person name="Zhu Y."/>
            <person name="Xu X."/>
            <person name="Sun L."/>
            <person name="Chen S."/>
            <person name="Nie H."/>
            <person name="Peng J."/>
            <person name="Xu J."/>
            <person name="Wang Y."/>
            <person name="Yuan Z."/>
            <person name="Wen Y."/>
            <person name="Yao Z."/>
            <person name="Shen Y."/>
            <person name="Qiang B."/>
            <person name="Hou Y."/>
            <person name="Yu J."/>
            <person name="Jin Q."/>
        </authorList>
    </citation>
    <scope>NUCLEOTIDE SEQUENCE [LARGE SCALE GENOMIC DNA]</scope>
    <source>
        <strain>Sb227</strain>
    </source>
</reference>
<evidence type="ECO:0000255" key="1">
    <source>
        <dbReference type="HAMAP-Rule" id="MF_01414"/>
    </source>
</evidence>
<keyword id="KW-0997">Cell inner membrane</keyword>
<keyword id="KW-1003">Cell membrane</keyword>
<keyword id="KW-0285">Flavoprotein</keyword>
<keyword id="KW-0288">FMN</keyword>
<keyword id="KW-0472">Membrane</keyword>
<keyword id="KW-0520">NAD</keyword>
<keyword id="KW-0560">Oxidoreductase</keyword>
<sequence>MILIIYAHPYPHHSHANKRMLEQARTLEGVEIRSLYQLYPDFNIDIAAEQEALSRADLIVWQHPMQWYSIPPLLKLWIDKVLSHGWAYGHGGKALHGKHLLWAVTTGGGESHFEIGAHPGFDVLSQPLQATAIYCGLNWLPPFAMHCTFICDDETLEGQARHYKQRLLEWQEAHHG</sequence>
<protein>
    <recommendedName>
        <fullName evidence="1">Glutathione-regulated potassium-efflux system ancillary protein KefF</fullName>
    </recommendedName>
    <alternativeName>
        <fullName evidence="1">Quinone oxidoreductase KefF</fullName>
        <ecNumber evidence="1">1.6.5.2</ecNumber>
    </alternativeName>
</protein>
<feature type="chain" id="PRO_1000068470" description="Glutathione-regulated potassium-efflux system ancillary protein KefF">
    <location>
        <begin position="1"/>
        <end position="176"/>
    </location>
</feature>
<feature type="binding site" evidence="1">
    <location>
        <position position="8"/>
    </location>
    <ligand>
        <name>FMN</name>
        <dbReference type="ChEBI" id="CHEBI:58210"/>
    </ligand>
</feature>
<feature type="binding site" evidence="1">
    <location>
        <begin position="14"/>
        <end position="17"/>
    </location>
    <ligand>
        <name>FMN</name>
        <dbReference type="ChEBI" id="CHEBI:58210"/>
    </ligand>
</feature>
<feature type="binding site" evidence="1">
    <location>
        <begin position="65"/>
        <end position="68"/>
    </location>
    <ligand>
        <name>FMN</name>
        <dbReference type="ChEBI" id="CHEBI:58210"/>
    </ligand>
</feature>
<feature type="binding site" evidence="1">
    <location>
        <begin position="105"/>
        <end position="108"/>
    </location>
    <ligand>
        <name>FMN</name>
        <dbReference type="ChEBI" id="CHEBI:58210"/>
    </ligand>
</feature>
<accession>Q326I7</accession>
<gene>
    <name evidence="1" type="primary">kefF</name>
    <name type="ordered locus">SBO_0035</name>
</gene>
<organism>
    <name type="scientific">Shigella boydii serotype 4 (strain Sb227)</name>
    <dbReference type="NCBI Taxonomy" id="300268"/>
    <lineage>
        <taxon>Bacteria</taxon>
        <taxon>Pseudomonadati</taxon>
        <taxon>Pseudomonadota</taxon>
        <taxon>Gammaproteobacteria</taxon>
        <taxon>Enterobacterales</taxon>
        <taxon>Enterobacteriaceae</taxon>
        <taxon>Shigella</taxon>
    </lineage>
</organism>